<name>SFH9_ARATH</name>
<proteinExistence type="evidence at transcript level"/>
<comment type="function">
    <text evidence="1">Required for transport of secretory proteins from the Golgi complex. Catalyzes the transfer of phosphatidylinositol and phosphatidylcholine between membranes in vitro (By similarity).</text>
</comment>
<comment type="subcellular location">
    <subcellularLocation>
        <location evidence="1">Golgi apparatus membrane</location>
        <topology evidence="1">Peripheral membrane protein</topology>
    </subcellularLocation>
    <subcellularLocation>
        <location evidence="1">Cell membrane</location>
        <topology evidence="1">Peripheral membrane protein</topology>
    </subcellularLocation>
</comment>
<comment type="similarity">
    <text evidence="5">Belongs to the SFH family.</text>
</comment>
<comment type="sequence caution" evidence="5">
    <conflict type="erroneous gene model prediction">
        <sequence resource="EMBL-CDS" id="BAB02894"/>
    </conflict>
</comment>
<comment type="sequence caution" evidence="5">
    <conflict type="frameshift">
        <sequence resource="EMBL" id="BX822701"/>
    </conflict>
</comment>
<sequence>MPALGEILLVPETDKGKSKDYIEVSEDEKITRTRSRSLKKKAIKASNKLTHSLRKRGKRVADQYAPIVIEDVRDEEEEKAVNVFRKALVSLDLLPPRHDDYHTMLRFLKARRFDLEKTVQMWEEMLKWRKENGVDTIIQDFVYDEYEEVQQYYPHGYHGVDREGRPVYIERLGKIDPGKLMKVTTLERFLRYHVQGFEKTFSEKFPACSIAAKRHINSSTTIIDVHGVSWMSFRKLAQDLVMRMQKIDGDNYPETLNQMYIINAGNGFKLVWNTVKGFLDPKTTSKIHVLGNKYRSHLLEIIDPSELPEFLGGNCKCAHEGGCMRFNKGPWNDPEIMKLVRSRDAMYKPKEMGLLENGEVAKLFSLRHVNTDMSSPDGGHVRERESHPEHDKRAQLSNQAEAVGVGRMEQSDSTSPLPNNLAVERSLTTSLQKVASFLARFILQLLGSLCLMFRILGRLVNKQPENQLRPELSVSVSQQQVPPPQVHPCWLRLQNLETMVTVLCDKPSSIPQEKEDILRDSLDRIKSIEQDLQKTKKALFLTASKQIELAECFENLKESSSTGMRSCWPRHCRNFQAET</sequence>
<reference key="1">
    <citation type="journal article" date="2000" name="DNA Res.">
        <title>Structural analysis of Arabidopsis thaliana chromosome 3. I. Sequence features of the regions of 4,504,864 bp covered by sixty P1 and TAC clones.</title>
        <authorList>
            <person name="Sato S."/>
            <person name="Nakamura Y."/>
            <person name="Kaneko T."/>
            <person name="Katoh T."/>
            <person name="Asamizu E."/>
            <person name="Tabata S."/>
        </authorList>
    </citation>
    <scope>NUCLEOTIDE SEQUENCE [LARGE SCALE GENOMIC DNA]</scope>
    <source>
        <strain>cv. Columbia</strain>
    </source>
</reference>
<reference key="2">
    <citation type="journal article" date="2017" name="Plant J.">
        <title>Araport11: a complete reannotation of the Arabidopsis thaliana reference genome.</title>
        <authorList>
            <person name="Cheng C.Y."/>
            <person name="Krishnakumar V."/>
            <person name="Chan A.P."/>
            <person name="Thibaud-Nissen F."/>
            <person name="Schobel S."/>
            <person name="Town C.D."/>
        </authorList>
    </citation>
    <scope>GENOME REANNOTATION</scope>
    <source>
        <strain>cv. Columbia</strain>
    </source>
</reference>
<reference key="3">
    <citation type="journal article" date="2004" name="Genome Res.">
        <title>Whole genome sequence comparisons and 'full-length' cDNA sequences: a combined approach to evaluate and improve Arabidopsis genome annotation.</title>
        <authorList>
            <person name="Castelli V."/>
            <person name="Aury J.-M."/>
            <person name="Jaillon O."/>
            <person name="Wincker P."/>
            <person name="Clepet C."/>
            <person name="Menard M."/>
            <person name="Cruaud C."/>
            <person name="Quetier F."/>
            <person name="Scarpelli C."/>
            <person name="Schaechter V."/>
            <person name="Temple G."/>
            <person name="Caboche M."/>
            <person name="Weissenbach J."/>
            <person name="Salanoubat M."/>
        </authorList>
    </citation>
    <scope>NUCLEOTIDE SEQUENCE [LARGE SCALE MRNA]</scope>
    <source>
        <strain>cv. Columbia</strain>
    </source>
</reference>
<reference key="4">
    <citation type="journal article" date="2005" name="J. Cell Biol.">
        <title>A Sec14p-nodulin domain phosphatidylinositol transfer protein polarizes membrane growth of Arabidopsis thaliana root hairs.</title>
        <authorList>
            <person name="Vincent P."/>
            <person name="Chua M."/>
            <person name="Nogue F."/>
            <person name="Fairbrother A."/>
            <person name="Mekeel H."/>
            <person name="Xu Y."/>
            <person name="Allen N."/>
            <person name="Bibikova T.N."/>
            <person name="Gilroy S."/>
            <person name="Bankaitis V.A."/>
        </authorList>
    </citation>
    <scope>GENE FAMILY</scope>
</reference>
<reference key="5">
    <citation type="journal article" date="2006" name="Nat. Chem. Biol.">
        <title>Phosphatidylinositol transfer proteins and cellular nanoreactors for lipid signaling.</title>
        <authorList>
            <person name="Ile K.E."/>
            <person name="Schaaf G."/>
            <person name="Bankaitis V.A."/>
        </authorList>
    </citation>
    <scope>REVIEW</scope>
</reference>
<accession>F4J7S8</accession>
<accession>Q9LRX7</accession>
<protein>
    <recommendedName>
        <fullName>Phosphatidylinositol/phosphatidylcholine transfer protein SFH9</fullName>
    </recommendedName>
    <alternativeName>
        <fullName>Protein SEC FOURTEEN HOMOLOGS 9</fullName>
        <shortName>AtSFH9</shortName>
    </alternativeName>
</protein>
<dbReference type="EMBL" id="AB028609">
    <property type="protein sequence ID" value="BAB02894.1"/>
    <property type="status" value="ALT_SEQ"/>
    <property type="molecule type" value="Genomic_DNA"/>
</dbReference>
<dbReference type="EMBL" id="CP002686">
    <property type="protein sequence ID" value="AEE76952.1"/>
    <property type="molecule type" value="Genomic_DNA"/>
</dbReference>
<dbReference type="EMBL" id="CP002686">
    <property type="protein sequence ID" value="ANM65902.1"/>
    <property type="molecule type" value="Genomic_DNA"/>
</dbReference>
<dbReference type="EMBL" id="CP002686">
    <property type="protein sequence ID" value="ANM65904.1"/>
    <property type="molecule type" value="Genomic_DNA"/>
</dbReference>
<dbReference type="EMBL" id="CP002686">
    <property type="protein sequence ID" value="ANM65906.1"/>
    <property type="molecule type" value="Genomic_DNA"/>
</dbReference>
<dbReference type="EMBL" id="BX822701">
    <property type="status" value="NOT_ANNOTATED_CDS"/>
    <property type="molecule type" value="mRNA"/>
</dbReference>
<dbReference type="RefSeq" id="NP_001327839.1">
    <property type="nucleotide sequence ID" value="NM_001338710.1"/>
</dbReference>
<dbReference type="RefSeq" id="NP_001327841.1">
    <property type="nucleotide sequence ID" value="NM_001338712.1"/>
</dbReference>
<dbReference type="RefSeq" id="NP_001327843.1">
    <property type="nucleotide sequence ID" value="NM_001338714.1"/>
</dbReference>
<dbReference type="RefSeq" id="NP_189128.2">
    <property type="nucleotide sequence ID" value="NM_113396.6"/>
</dbReference>
<dbReference type="SMR" id="F4J7S8"/>
<dbReference type="FunCoup" id="F4J7S8">
    <property type="interactions" value="69"/>
</dbReference>
<dbReference type="STRING" id="3702.F4J7S8"/>
<dbReference type="iPTMnet" id="F4J7S8"/>
<dbReference type="PaxDb" id="3702-AT3G24840.1"/>
<dbReference type="ProteomicsDB" id="232577"/>
<dbReference type="EnsemblPlants" id="AT3G24840.1">
    <property type="protein sequence ID" value="AT3G24840.1"/>
    <property type="gene ID" value="AT3G24840"/>
</dbReference>
<dbReference type="EnsemblPlants" id="AT3G24840.2">
    <property type="protein sequence ID" value="AT3G24840.2"/>
    <property type="gene ID" value="AT3G24840"/>
</dbReference>
<dbReference type="EnsemblPlants" id="AT3G24840.4">
    <property type="protein sequence ID" value="AT3G24840.4"/>
    <property type="gene ID" value="AT3G24840"/>
</dbReference>
<dbReference type="EnsemblPlants" id="AT3G24840.6">
    <property type="protein sequence ID" value="AT3G24840.6"/>
    <property type="gene ID" value="AT3G24840"/>
</dbReference>
<dbReference type="GeneID" id="822082"/>
<dbReference type="Gramene" id="AT3G24840.1">
    <property type="protein sequence ID" value="AT3G24840.1"/>
    <property type="gene ID" value="AT3G24840"/>
</dbReference>
<dbReference type="Gramene" id="AT3G24840.2">
    <property type="protein sequence ID" value="AT3G24840.2"/>
    <property type="gene ID" value="AT3G24840"/>
</dbReference>
<dbReference type="Gramene" id="AT3G24840.4">
    <property type="protein sequence ID" value="AT3G24840.4"/>
    <property type="gene ID" value="AT3G24840"/>
</dbReference>
<dbReference type="Gramene" id="AT3G24840.6">
    <property type="protein sequence ID" value="AT3G24840.6"/>
    <property type="gene ID" value="AT3G24840"/>
</dbReference>
<dbReference type="KEGG" id="ath:AT3G24840"/>
<dbReference type="Araport" id="AT3G24840"/>
<dbReference type="TAIR" id="AT3G24840"/>
<dbReference type="eggNOG" id="KOG1471">
    <property type="taxonomic scope" value="Eukaryota"/>
</dbReference>
<dbReference type="HOGENOM" id="CLU_014001_11_1_1"/>
<dbReference type="InParanoid" id="F4J7S8"/>
<dbReference type="PRO" id="PR:F4J7S8"/>
<dbReference type="Proteomes" id="UP000006548">
    <property type="component" value="Chromosome 3"/>
</dbReference>
<dbReference type="ExpressionAtlas" id="F4J7S8">
    <property type="expression patterns" value="baseline and differential"/>
</dbReference>
<dbReference type="GO" id="GO:0000139">
    <property type="term" value="C:Golgi membrane"/>
    <property type="evidence" value="ECO:0007669"/>
    <property type="project" value="UniProtKB-SubCell"/>
</dbReference>
<dbReference type="GO" id="GO:0005886">
    <property type="term" value="C:plasma membrane"/>
    <property type="evidence" value="ECO:0007669"/>
    <property type="project" value="UniProtKB-SubCell"/>
</dbReference>
<dbReference type="GO" id="GO:0015031">
    <property type="term" value="P:protein transport"/>
    <property type="evidence" value="ECO:0007669"/>
    <property type="project" value="UniProtKB-KW"/>
</dbReference>
<dbReference type="CDD" id="cd00170">
    <property type="entry name" value="SEC14"/>
    <property type="match status" value="1"/>
</dbReference>
<dbReference type="FunFam" id="3.40.525.10:FF:000011">
    <property type="entry name" value="SEC14 cytosolic factor"/>
    <property type="match status" value="1"/>
</dbReference>
<dbReference type="Gene3D" id="3.40.525.10">
    <property type="entry name" value="CRAL-TRIO lipid binding domain"/>
    <property type="match status" value="1"/>
</dbReference>
<dbReference type="Gene3D" id="1.10.8.20">
    <property type="entry name" value="N-terminal domain of phosphatidylinositol transfer protein sec14p"/>
    <property type="match status" value="1"/>
</dbReference>
<dbReference type="InterPro" id="IPR001251">
    <property type="entry name" value="CRAL-TRIO_dom"/>
</dbReference>
<dbReference type="InterPro" id="IPR036865">
    <property type="entry name" value="CRAL-TRIO_dom_sf"/>
</dbReference>
<dbReference type="InterPro" id="IPR011074">
    <property type="entry name" value="CRAL/TRIO_N_dom"/>
</dbReference>
<dbReference type="InterPro" id="IPR036273">
    <property type="entry name" value="CRAL/TRIO_N_dom_sf"/>
</dbReference>
<dbReference type="InterPro" id="IPR051026">
    <property type="entry name" value="PI/PC_transfer"/>
</dbReference>
<dbReference type="PANTHER" id="PTHR45657">
    <property type="entry name" value="CRAL-TRIO DOMAIN-CONTAINING PROTEIN YKL091C-RELATED"/>
    <property type="match status" value="1"/>
</dbReference>
<dbReference type="PANTHER" id="PTHR45657:SF43">
    <property type="entry name" value="PHOSPHATIDYLINOSITOL_PHOSPHATIDYLCHOLINE TRANSFER PROTEIN SFH9"/>
    <property type="match status" value="1"/>
</dbReference>
<dbReference type="Pfam" id="PF00650">
    <property type="entry name" value="CRAL_TRIO"/>
    <property type="match status" value="1"/>
</dbReference>
<dbReference type="Pfam" id="PF03765">
    <property type="entry name" value="CRAL_TRIO_N"/>
    <property type="match status" value="1"/>
</dbReference>
<dbReference type="PRINTS" id="PR00180">
    <property type="entry name" value="CRETINALDHBP"/>
</dbReference>
<dbReference type="SMART" id="SM01100">
    <property type="entry name" value="CRAL_TRIO_N"/>
    <property type="match status" value="1"/>
</dbReference>
<dbReference type="SMART" id="SM00516">
    <property type="entry name" value="SEC14"/>
    <property type="match status" value="1"/>
</dbReference>
<dbReference type="SUPFAM" id="SSF52087">
    <property type="entry name" value="CRAL/TRIO domain"/>
    <property type="match status" value="1"/>
</dbReference>
<dbReference type="SUPFAM" id="SSF46938">
    <property type="entry name" value="CRAL/TRIO N-terminal domain"/>
    <property type="match status" value="1"/>
</dbReference>
<dbReference type="PROSITE" id="PS50191">
    <property type="entry name" value="CRAL_TRIO"/>
    <property type="match status" value="1"/>
</dbReference>
<feature type="chain" id="PRO_0000423469" description="Phosphatidylinositol/phosphatidylcholine transfer protein SFH9">
    <location>
        <begin position="1"/>
        <end position="579"/>
    </location>
</feature>
<feature type="domain" description="CRAL-TRIO" evidence="3">
    <location>
        <begin position="145"/>
        <end position="319"/>
    </location>
</feature>
<feature type="region of interest" description="Disordered" evidence="4">
    <location>
        <begin position="372"/>
        <end position="419"/>
    </location>
</feature>
<feature type="coiled-coil region" evidence="2">
    <location>
        <begin position="512"/>
        <end position="539"/>
    </location>
</feature>
<feature type="compositionally biased region" description="Basic and acidic residues" evidence="4">
    <location>
        <begin position="379"/>
        <end position="394"/>
    </location>
</feature>
<evidence type="ECO:0000250" key="1"/>
<evidence type="ECO:0000255" key="2"/>
<evidence type="ECO:0000255" key="3">
    <source>
        <dbReference type="PROSITE-ProRule" id="PRU00056"/>
    </source>
</evidence>
<evidence type="ECO:0000256" key="4">
    <source>
        <dbReference type="SAM" id="MobiDB-lite"/>
    </source>
</evidence>
<evidence type="ECO:0000305" key="5"/>
<organism>
    <name type="scientific">Arabidopsis thaliana</name>
    <name type="common">Mouse-ear cress</name>
    <dbReference type="NCBI Taxonomy" id="3702"/>
    <lineage>
        <taxon>Eukaryota</taxon>
        <taxon>Viridiplantae</taxon>
        <taxon>Streptophyta</taxon>
        <taxon>Embryophyta</taxon>
        <taxon>Tracheophyta</taxon>
        <taxon>Spermatophyta</taxon>
        <taxon>Magnoliopsida</taxon>
        <taxon>eudicotyledons</taxon>
        <taxon>Gunneridae</taxon>
        <taxon>Pentapetalae</taxon>
        <taxon>rosids</taxon>
        <taxon>malvids</taxon>
        <taxon>Brassicales</taxon>
        <taxon>Brassicaceae</taxon>
        <taxon>Camelineae</taxon>
        <taxon>Arabidopsis</taxon>
    </lineage>
</organism>
<keyword id="KW-1003">Cell membrane</keyword>
<keyword id="KW-0175">Coiled coil</keyword>
<keyword id="KW-0333">Golgi apparatus</keyword>
<keyword id="KW-0472">Membrane</keyword>
<keyword id="KW-0653">Protein transport</keyword>
<keyword id="KW-1185">Reference proteome</keyword>
<keyword id="KW-0813">Transport</keyword>
<gene>
    <name type="primary">SFH9</name>
    <name type="ordered locus">At3g24840</name>
    <name type="ORF">K7P8.13</name>
</gene>